<evidence type="ECO:0000255" key="1">
    <source>
        <dbReference type="HAMAP-Rule" id="MF_01538"/>
    </source>
</evidence>
<reference key="1">
    <citation type="submission" date="2008-06" db="EMBL/GenBank/DDBJ databases">
        <title>Lactobacillus casei BL23 complete genome sequence.</title>
        <authorList>
            <person name="Maze A."/>
            <person name="Boel G."/>
            <person name="Bourand A."/>
            <person name="Loux V."/>
            <person name="Gibrat J.F."/>
            <person name="Zuniga M."/>
            <person name="Hartke A."/>
            <person name="Deutscher J."/>
        </authorList>
    </citation>
    <scope>NUCLEOTIDE SEQUENCE [LARGE SCALE GENOMIC DNA]</scope>
    <source>
        <strain>BL23</strain>
    </source>
</reference>
<accession>B3WE94</accession>
<protein>
    <recommendedName>
        <fullName evidence="1">UPF0346 protein LCABL_16140</fullName>
    </recommendedName>
</protein>
<dbReference type="EMBL" id="FM177140">
    <property type="protein sequence ID" value="CAQ66695.1"/>
    <property type="molecule type" value="Genomic_DNA"/>
</dbReference>
<dbReference type="SMR" id="B3WE94"/>
<dbReference type="KEGG" id="lcb:LCABL_16140"/>
<dbReference type="HOGENOM" id="CLU_177534_1_0_9"/>
<dbReference type="Gene3D" id="1.10.150.260">
    <property type="entry name" value="YozE SAM-like"/>
    <property type="match status" value="1"/>
</dbReference>
<dbReference type="HAMAP" id="MF_01538">
    <property type="entry name" value="UPF0346"/>
    <property type="match status" value="1"/>
</dbReference>
<dbReference type="InterPro" id="IPR010673">
    <property type="entry name" value="UPF0346"/>
</dbReference>
<dbReference type="InterPro" id="IPR023089">
    <property type="entry name" value="YozE_SAM-like"/>
</dbReference>
<dbReference type="InterPro" id="IPR036806">
    <property type="entry name" value="YozE_SAM-like_sf"/>
</dbReference>
<dbReference type="NCBIfam" id="NF010193">
    <property type="entry name" value="PRK13672.1"/>
    <property type="match status" value="1"/>
</dbReference>
<dbReference type="Pfam" id="PF06855">
    <property type="entry name" value="YozE_SAM_like"/>
    <property type="match status" value="1"/>
</dbReference>
<dbReference type="PIRSF" id="PIRSF037262">
    <property type="entry name" value="UCP037262"/>
    <property type="match status" value="1"/>
</dbReference>
<dbReference type="SUPFAM" id="SSF140652">
    <property type="entry name" value="YozE-like"/>
    <property type="match status" value="1"/>
</dbReference>
<proteinExistence type="inferred from homology"/>
<comment type="similarity">
    <text evidence="1">Belongs to the UPF0346 family.</text>
</comment>
<feature type="chain" id="PRO_1000146612" description="UPF0346 protein LCABL_16140">
    <location>
        <begin position="1"/>
        <end position="80"/>
    </location>
</feature>
<sequence>MHRTFYEYLMTLRNPNDHSEIAEFAKNAFLDQSFPKQEKDYHRLSDYLELNGNYLPSMAVFDETYRAYEASESTGGDSYQ</sequence>
<name>Y1614_LACCB</name>
<gene>
    <name type="ordered locus">LCABL_16140</name>
</gene>
<organism>
    <name type="scientific">Lacticaseibacillus casei (strain BL23)</name>
    <name type="common">Lactobacillus casei</name>
    <dbReference type="NCBI Taxonomy" id="543734"/>
    <lineage>
        <taxon>Bacteria</taxon>
        <taxon>Bacillati</taxon>
        <taxon>Bacillota</taxon>
        <taxon>Bacilli</taxon>
        <taxon>Lactobacillales</taxon>
        <taxon>Lactobacillaceae</taxon>
        <taxon>Lacticaseibacillus</taxon>
    </lineage>
</organism>